<name>GRCA_SALEP</name>
<dbReference type="EMBL" id="AM933172">
    <property type="protein sequence ID" value="CAR34155.1"/>
    <property type="molecule type" value="Genomic_DNA"/>
</dbReference>
<dbReference type="RefSeq" id="WP_000627811.1">
    <property type="nucleotide sequence ID" value="NC_011294.1"/>
</dbReference>
<dbReference type="SMR" id="B5QTW0"/>
<dbReference type="GeneID" id="66757020"/>
<dbReference type="KEGG" id="set:SEN2573"/>
<dbReference type="HOGENOM" id="CLU_133780_0_0_6"/>
<dbReference type="Proteomes" id="UP000000613">
    <property type="component" value="Chromosome"/>
</dbReference>
<dbReference type="GO" id="GO:0005829">
    <property type="term" value="C:cytosol"/>
    <property type="evidence" value="ECO:0007669"/>
    <property type="project" value="TreeGrafter"/>
</dbReference>
<dbReference type="GO" id="GO:0008861">
    <property type="term" value="F:formate C-acetyltransferase activity"/>
    <property type="evidence" value="ECO:0007669"/>
    <property type="project" value="TreeGrafter"/>
</dbReference>
<dbReference type="FunFam" id="3.20.70.20:FF:000002">
    <property type="entry name" value="Autonomous glycyl radical cofactor"/>
    <property type="match status" value="1"/>
</dbReference>
<dbReference type="Gene3D" id="3.20.70.20">
    <property type="match status" value="1"/>
</dbReference>
<dbReference type="HAMAP" id="MF_00806">
    <property type="entry name" value="GrcA"/>
    <property type="match status" value="1"/>
</dbReference>
<dbReference type="InterPro" id="IPR050244">
    <property type="entry name" value="Auton_GlycylRad_Cofactor"/>
</dbReference>
<dbReference type="InterPro" id="IPR019777">
    <property type="entry name" value="Form_AcTrfase_GR_CS"/>
</dbReference>
<dbReference type="InterPro" id="IPR001150">
    <property type="entry name" value="Gly_radical"/>
</dbReference>
<dbReference type="InterPro" id="IPR011140">
    <property type="entry name" value="Glycyl_radical_cofactor_GrcA"/>
</dbReference>
<dbReference type="NCBIfam" id="TIGR04365">
    <property type="entry name" value="spare_glycyl"/>
    <property type="match status" value="1"/>
</dbReference>
<dbReference type="PANTHER" id="PTHR30191">
    <property type="entry name" value="FORMATE ACETYLTRANSFERASE"/>
    <property type="match status" value="1"/>
</dbReference>
<dbReference type="PANTHER" id="PTHR30191:SF0">
    <property type="entry name" value="FORMATE ACETYLTRANSFERASE 1"/>
    <property type="match status" value="1"/>
</dbReference>
<dbReference type="Pfam" id="PF01228">
    <property type="entry name" value="Gly_radical"/>
    <property type="match status" value="1"/>
</dbReference>
<dbReference type="PIRSF" id="PIRSF000378">
    <property type="entry name" value="Gly_radicl_yfiD"/>
    <property type="match status" value="1"/>
</dbReference>
<dbReference type="SUPFAM" id="SSF51998">
    <property type="entry name" value="PFL-like glycyl radical enzymes"/>
    <property type="match status" value="1"/>
</dbReference>
<dbReference type="PROSITE" id="PS00850">
    <property type="entry name" value="GLY_RADICAL_1"/>
    <property type="match status" value="1"/>
</dbReference>
<dbReference type="PROSITE" id="PS51149">
    <property type="entry name" value="GLY_RADICAL_2"/>
    <property type="match status" value="1"/>
</dbReference>
<keyword id="KW-0556">Organic radical</keyword>
<organism>
    <name type="scientific">Salmonella enteritidis PT4 (strain P125109)</name>
    <dbReference type="NCBI Taxonomy" id="550537"/>
    <lineage>
        <taxon>Bacteria</taxon>
        <taxon>Pseudomonadati</taxon>
        <taxon>Pseudomonadota</taxon>
        <taxon>Gammaproteobacteria</taxon>
        <taxon>Enterobacterales</taxon>
        <taxon>Enterobacteriaceae</taxon>
        <taxon>Salmonella</taxon>
    </lineage>
</organism>
<reference key="1">
    <citation type="journal article" date="2008" name="Genome Res.">
        <title>Comparative genome analysis of Salmonella enteritidis PT4 and Salmonella gallinarum 287/91 provides insights into evolutionary and host adaptation pathways.</title>
        <authorList>
            <person name="Thomson N.R."/>
            <person name="Clayton D.J."/>
            <person name="Windhorst D."/>
            <person name="Vernikos G."/>
            <person name="Davidson S."/>
            <person name="Churcher C."/>
            <person name="Quail M.A."/>
            <person name="Stevens M."/>
            <person name="Jones M.A."/>
            <person name="Watson M."/>
            <person name="Barron A."/>
            <person name="Layton A."/>
            <person name="Pickard D."/>
            <person name="Kingsley R.A."/>
            <person name="Bignell A."/>
            <person name="Clark L."/>
            <person name="Harris B."/>
            <person name="Ormond D."/>
            <person name="Abdellah Z."/>
            <person name="Brooks K."/>
            <person name="Cherevach I."/>
            <person name="Chillingworth T."/>
            <person name="Woodward J."/>
            <person name="Norberczak H."/>
            <person name="Lord A."/>
            <person name="Arrowsmith C."/>
            <person name="Jagels K."/>
            <person name="Moule S."/>
            <person name="Mungall K."/>
            <person name="Saunders M."/>
            <person name="Whitehead S."/>
            <person name="Chabalgoity J.A."/>
            <person name="Maskell D."/>
            <person name="Humphreys T."/>
            <person name="Roberts M."/>
            <person name="Barrow P.A."/>
            <person name="Dougan G."/>
            <person name="Parkhill J."/>
        </authorList>
    </citation>
    <scope>NUCLEOTIDE SEQUENCE [LARGE SCALE GENOMIC DNA]</scope>
    <source>
        <strain>P125109</strain>
    </source>
</reference>
<protein>
    <recommendedName>
        <fullName evidence="1">Autonomous glycyl radical cofactor</fullName>
    </recommendedName>
</protein>
<proteinExistence type="inferred from homology"/>
<gene>
    <name evidence="1" type="primary">grcA</name>
    <name type="ordered locus">SEN2573</name>
</gene>
<comment type="function">
    <text evidence="1">Acts as a radical domain for damaged PFL and possibly other radical proteins.</text>
</comment>
<evidence type="ECO:0000255" key="1">
    <source>
        <dbReference type="HAMAP-Rule" id="MF_00806"/>
    </source>
</evidence>
<sequence length="127" mass="14344">MITGIQITKAANDDLLNSFWLLDSEKGEARCIVAKSGFAEDEVVAVSKLGEIEYREIPMEVKPEVRVEGGQHLNVNVLRRETLEDAVKHPEKYPQLTIRVSGYAVRFNSLTPEQQRDVIARTFTESL</sequence>
<feature type="chain" id="PRO_1000133995" description="Autonomous glycyl radical cofactor">
    <location>
        <begin position="1"/>
        <end position="127"/>
    </location>
</feature>
<feature type="domain" description="Glycine radical" evidence="1">
    <location>
        <begin position="5"/>
        <end position="127"/>
    </location>
</feature>
<feature type="modified residue" description="Glycine radical" evidence="1">
    <location>
        <position position="102"/>
    </location>
</feature>
<accession>B5QTW0</accession>